<dbReference type="EC" id="2.1.1.192" evidence="1"/>
<dbReference type="EMBL" id="CP001182">
    <property type="protein sequence ID" value="ACJ40022.1"/>
    <property type="molecule type" value="Genomic_DNA"/>
</dbReference>
<dbReference type="RefSeq" id="WP_000093084.1">
    <property type="nucleotide sequence ID" value="NC_011586.2"/>
</dbReference>
<dbReference type="SMR" id="B7I5G4"/>
<dbReference type="GeneID" id="92892502"/>
<dbReference type="KEGG" id="abn:AB57_0601"/>
<dbReference type="HOGENOM" id="CLU_029101_0_0_6"/>
<dbReference type="Proteomes" id="UP000007094">
    <property type="component" value="Chromosome"/>
</dbReference>
<dbReference type="GO" id="GO:0005737">
    <property type="term" value="C:cytoplasm"/>
    <property type="evidence" value="ECO:0007669"/>
    <property type="project" value="UniProtKB-SubCell"/>
</dbReference>
<dbReference type="GO" id="GO:0051539">
    <property type="term" value="F:4 iron, 4 sulfur cluster binding"/>
    <property type="evidence" value="ECO:0007669"/>
    <property type="project" value="UniProtKB-UniRule"/>
</dbReference>
<dbReference type="GO" id="GO:0046872">
    <property type="term" value="F:metal ion binding"/>
    <property type="evidence" value="ECO:0007669"/>
    <property type="project" value="UniProtKB-KW"/>
</dbReference>
<dbReference type="GO" id="GO:0070040">
    <property type="term" value="F:rRNA (adenine(2503)-C2-)-methyltransferase activity"/>
    <property type="evidence" value="ECO:0007669"/>
    <property type="project" value="UniProtKB-UniRule"/>
</dbReference>
<dbReference type="GO" id="GO:0019843">
    <property type="term" value="F:rRNA binding"/>
    <property type="evidence" value="ECO:0007669"/>
    <property type="project" value="UniProtKB-UniRule"/>
</dbReference>
<dbReference type="GO" id="GO:0002935">
    <property type="term" value="F:tRNA (adenine(37)-C2)-methyltransferase activity"/>
    <property type="evidence" value="ECO:0007669"/>
    <property type="project" value="UniProtKB-UniRule"/>
</dbReference>
<dbReference type="GO" id="GO:0000049">
    <property type="term" value="F:tRNA binding"/>
    <property type="evidence" value="ECO:0007669"/>
    <property type="project" value="UniProtKB-UniRule"/>
</dbReference>
<dbReference type="GO" id="GO:0070475">
    <property type="term" value="P:rRNA base methylation"/>
    <property type="evidence" value="ECO:0007669"/>
    <property type="project" value="UniProtKB-UniRule"/>
</dbReference>
<dbReference type="GO" id="GO:0030488">
    <property type="term" value="P:tRNA methylation"/>
    <property type="evidence" value="ECO:0007669"/>
    <property type="project" value="UniProtKB-UniRule"/>
</dbReference>
<dbReference type="CDD" id="cd01335">
    <property type="entry name" value="Radical_SAM"/>
    <property type="match status" value="1"/>
</dbReference>
<dbReference type="FunFam" id="1.10.150.530:FF:000003">
    <property type="entry name" value="Dual-specificity RNA methyltransferase RlmN"/>
    <property type="match status" value="1"/>
</dbReference>
<dbReference type="FunFam" id="3.20.20.70:FF:000008">
    <property type="entry name" value="Dual-specificity RNA methyltransferase RlmN"/>
    <property type="match status" value="1"/>
</dbReference>
<dbReference type="Gene3D" id="1.10.150.530">
    <property type="match status" value="1"/>
</dbReference>
<dbReference type="Gene3D" id="3.20.20.70">
    <property type="entry name" value="Aldolase class I"/>
    <property type="match status" value="1"/>
</dbReference>
<dbReference type="HAMAP" id="MF_01849">
    <property type="entry name" value="RNA_methyltr_RlmN"/>
    <property type="match status" value="1"/>
</dbReference>
<dbReference type="InterPro" id="IPR013785">
    <property type="entry name" value="Aldolase_TIM"/>
</dbReference>
<dbReference type="InterPro" id="IPR040072">
    <property type="entry name" value="Methyltransferase_A"/>
</dbReference>
<dbReference type="InterPro" id="IPR048641">
    <property type="entry name" value="RlmN_N"/>
</dbReference>
<dbReference type="InterPro" id="IPR027492">
    <property type="entry name" value="RNA_MTrfase_RlmN"/>
</dbReference>
<dbReference type="InterPro" id="IPR004383">
    <property type="entry name" value="rRNA_lsu_MTrfase_RlmN/Cfr"/>
</dbReference>
<dbReference type="InterPro" id="IPR007197">
    <property type="entry name" value="rSAM"/>
</dbReference>
<dbReference type="NCBIfam" id="TIGR00048">
    <property type="entry name" value="rRNA_mod_RlmN"/>
    <property type="match status" value="1"/>
</dbReference>
<dbReference type="PANTHER" id="PTHR30544">
    <property type="entry name" value="23S RRNA METHYLTRANSFERASE"/>
    <property type="match status" value="1"/>
</dbReference>
<dbReference type="PANTHER" id="PTHR30544:SF5">
    <property type="entry name" value="RADICAL SAM CORE DOMAIN-CONTAINING PROTEIN"/>
    <property type="match status" value="1"/>
</dbReference>
<dbReference type="Pfam" id="PF04055">
    <property type="entry name" value="Radical_SAM"/>
    <property type="match status" value="1"/>
</dbReference>
<dbReference type="Pfam" id="PF21016">
    <property type="entry name" value="RlmN_N"/>
    <property type="match status" value="1"/>
</dbReference>
<dbReference type="PIRSF" id="PIRSF006004">
    <property type="entry name" value="CHP00048"/>
    <property type="match status" value="1"/>
</dbReference>
<dbReference type="SFLD" id="SFLDF00275">
    <property type="entry name" value="adenosine_C2_methyltransferase"/>
    <property type="match status" value="1"/>
</dbReference>
<dbReference type="SFLD" id="SFLDG01062">
    <property type="entry name" value="methyltransferase_(Class_A)"/>
    <property type="match status" value="1"/>
</dbReference>
<dbReference type="SUPFAM" id="SSF102114">
    <property type="entry name" value="Radical SAM enzymes"/>
    <property type="match status" value="1"/>
</dbReference>
<dbReference type="PROSITE" id="PS51918">
    <property type="entry name" value="RADICAL_SAM"/>
    <property type="match status" value="1"/>
</dbReference>
<evidence type="ECO:0000255" key="1">
    <source>
        <dbReference type="HAMAP-Rule" id="MF_01849"/>
    </source>
</evidence>
<evidence type="ECO:0000255" key="2">
    <source>
        <dbReference type="PROSITE-ProRule" id="PRU01266"/>
    </source>
</evidence>
<evidence type="ECO:0000256" key="3">
    <source>
        <dbReference type="SAM" id="MobiDB-lite"/>
    </source>
</evidence>
<name>RLMN_ACIB5</name>
<comment type="function">
    <text evidence="1">Specifically methylates position 2 of adenine 2503 in 23S rRNA and position 2 of adenine 37 in tRNAs. m2A2503 modification seems to play a crucial role in the proofreading step occurring at the peptidyl transferase center and thus would serve to optimize ribosomal fidelity.</text>
</comment>
<comment type="catalytic activity">
    <reaction evidence="1">
        <text>adenosine(2503) in 23S rRNA + 2 reduced [2Fe-2S]-[ferredoxin] + 2 S-adenosyl-L-methionine = 2-methyladenosine(2503) in 23S rRNA + 5'-deoxyadenosine + L-methionine + 2 oxidized [2Fe-2S]-[ferredoxin] + S-adenosyl-L-homocysteine</text>
        <dbReference type="Rhea" id="RHEA:42916"/>
        <dbReference type="Rhea" id="RHEA-COMP:10000"/>
        <dbReference type="Rhea" id="RHEA-COMP:10001"/>
        <dbReference type="Rhea" id="RHEA-COMP:10152"/>
        <dbReference type="Rhea" id="RHEA-COMP:10282"/>
        <dbReference type="ChEBI" id="CHEBI:17319"/>
        <dbReference type="ChEBI" id="CHEBI:33737"/>
        <dbReference type="ChEBI" id="CHEBI:33738"/>
        <dbReference type="ChEBI" id="CHEBI:57844"/>
        <dbReference type="ChEBI" id="CHEBI:57856"/>
        <dbReference type="ChEBI" id="CHEBI:59789"/>
        <dbReference type="ChEBI" id="CHEBI:74411"/>
        <dbReference type="ChEBI" id="CHEBI:74497"/>
        <dbReference type="EC" id="2.1.1.192"/>
    </reaction>
</comment>
<comment type="catalytic activity">
    <reaction evidence="1">
        <text>adenosine(37) in tRNA + 2 reduced [2Fe-2S]-[ferredoxin] + 2 S-adenosyl-L-methionine = 2-methyladenosine(37) in tRNA + 5'-deoxyadenosine + L-methionine + 2 oxidized [2Fe-2S]-[ferredoxin] + S-adenosyl-L-homocysteine</text>
        <dbReference type="Rhea" id="RHEA:43332"/>
        <dbReference type="Rhea" id="RHEA-COMP:10000"/>
        <dbReference type="Rhea" id="RHEA-COMP:10001"/>
        <dbReference type="Rhea" id="RHEA-COMP:10162"/>
        <dbReference type="Rhea" id="RHEA-COMP:10485"/>
        <dbReference type="ChEBI" id="CHEBI:17319"/>
        <dbReference type="ChEBI" id="CHEBI:33737"/>
        <dbReference type="ChEBI" id="CHEBI:33738"/>
        <dbReference type="ChEBI" id="CHEBI:57844"/>
        <dbReference type="ChEBI" id="CHEBI:57856"/>
        <dbReference type="ChEBI" id="CHEBI:59789"/>
        <dbReference type="ChEBI" id="CHEBI:74411"/>
        <dbReference type="ChEBI" id="CHEBI:74497"/>
        <dbReference type="EC" id="2.1.1.192"/>
    </reaction>
</comment>
<comment type="cofactor">
    <cofactor evidence="1">
        <name>[4Fe-4S] cluster</name>
        <dbReference type="ChEBI" id="CHEBI:49883"/>
    </cofactor>
    <text evidence="1">Binds 1 [4Fe-4S] cluster. The cluster is coordinated with 3 cysteines and an exchangeable S-adenosyl-L-methionine.</text>
</comment>
<comment type="subcellular location">
    <subcellularLocation>
        <location evidence="1">Cytoplasm</location>
    </subcellularLocation>
</comment>
<comment type="miscellaneous">
    <text evidence="1">Reaction proceeds by a ping-pong mechanism involving intermediate methylation of a conserved cysteine residue.</text>
</comment>
<comment type="similarity">
    <text evidence="1">Belongs to the radical SAM superfamily. RlmN family.</text>
</comment>
<reference key="1">
    <citation type="journal article" date="2008" name="J. Bacteriol.">
        <title>Comparative genome sequence analysis of multidrug-resistant Acinetobacter baumannii.</title>
        <authorList>
            <person name="Adams M.D."/>
            <person name="Goglin K."/>
            <person name="Molyneaux N."/>
            <person name="Hujer K.M."/>
            <person name="Lavender H."/>
            <person name="Jamison J.J."/>
            <person name="MacDonald I.J."/>
            <person name="Martin K.M."/>
            <person name="Russo T."/>
            <person name="Campagnari A.A."/>
            <person name="Hujer A.M."/>
            <person name="Bonomo R.A."/>
            <person name="Gill S.R."/>
        </authorList>
    </citation>
    <scope>NUCLEOTIDE SEQUENCE [LARGE SCALE GENOMIC DNA]</scope>
    <source>
        <strain>AB0057</strain>
    </source>
</reference>
<proteinExistence type="inferred from homology"/>
<protein>
    <recommendedName>
        <fullName evidence="1">Dual-specificity RNA methyltransferase RlmN</fullName>
        <ecNumber evidence="1">2.1.1.192</ecNumber>
    </recommendedName>
    <alternativeName>
        <fullName evidence="1">23S rRNA (adenine(2503)-C(2))-methyltransferase</fullName>
    </alternativeName>
    <alternativeName>
        <fullName evidence="1">23S rRNA m2A2503 methyltransferase</fullName>
    </alternativeName>
    <alternativeName>
        <fullName evidence="1">Ribosomal RNA large subunit methyltransferase N</fullName>
    </alternativeName>
    <alternativeName>
        <fullName evidence="1">tRNA (adenine(37)-C(2))-methyltransferase</fullName>
    </alternativeName>
    <alternativeName>
        <fullName evidence="1">tRNA m2A37 methyltransferase</fullName>
    </alternativeName>
</protein>
<feature type="chain" id="PRO_1000188540" description="Dual-specificity RNA methyltransferase RlmN">
    <location>
        <begin position="1"/>
        <end position="410"/>
    </location>
</feature>
<feature type="domain" description="Radical SAM core" evidence="2">
    <location>
        <begin position="130"/>
        <end position="373"/>
    </location>
</feature>
<feature type="region of interest" description="Disordered" evidence="3">
    <location>
        <begin position="7"/>
        <end position="26"/>
    </location>
</feature>
<feature type="compositionally biased region" description="Low complexity" evidence="3">
    <location>
        <begin position="15"/>
        <end position="26"/>
    </location>
</feature>
<feature type="active site" description="Proton acceptor" evidence="1">
    <location>
        <position position="120"/>
    </location>
</feature>
<feature type="active site" description="S-methylcysteine intermediate" evidence="1">
    <location>
        <position position="378"/>
    </location>
</feature>
<feature type="binding site" evidence="1">
    <location>
        <position position="144"/>
    </location>
    <ligand>
        <name>[4Fe-4S] cluster</name>
        <dbReference type="ChEBI" id="CHEBI:49883"/>
        <note>4Fe-4S-S-AdoMet</note>
    </ligand>
</feature>
<feature type="binding site" evidence="1">
    <location>
        <position position="148"/>
    </location>
    <ligand>
        <name>[4Fe-4S] cluster</name>
        <dbReference type="ChEBI" id="CHEBI:49883"/>
        <note>4Fe-4S-S-AdoMet</note>
    </ligand>
</feature>
<feature type="binding site" evidence="1">
    <location>
        <position position="151"/>
    </location>
    <ligand>
        <name>[4Fe-4S] cluster</name>
        <dbReference type="ChEBI" id="CHEBI:49883"/>
        <note>4Fe-4S-S-AdoMet</note>
    </ligand>
</feature>
<feature type="binding site" evidence="1">
    <location>
        <begin position="200"/>
        <end position="201"/>
    </location>
    <ligand>
        <name>S-adenosyl-L-methionine</name>
        <dbReference type="ChEBI" id="CHEBI:59789"/>
    </ligand>
</feature>
<feature type="binding site" evidence="1">
    <location>
        <position position="232"/>
    </location>
    <ligand>
        <name>S-adenosyl-L-methionine</name>
        <dbReference type="ChEBI" id="CHEBI:59789"/>
    </ligand>
</feature>
<feature type="binding site" evidence="1">
    <location>
        <begin position="254"/>
        <end position="256"/>
    </location>
    <ligand>
        <name>S-adenosyl-L-methionine</name>
        <dbReference type="ChEBI" id="CHEBI:59789"/>
    </ligand>
</feature>
<feature type="binding site" evidence="1">
    <location>
        <position position="335"/>
    </location>
    <ligand>
        <name>S-adenosyl-L-methionine</name>
        <dbReference type="ChEBI" id="CHEBI:59789"/>
    </ligand>
</feature>
<feature type="disulfide bond" description="(transient)" evidence="1">
    <location>
        <begin position="137"/>
        <end position="378"/>
    </location>
</feature>
<accession>B7I5G4</accession>
<sequence>MSSAVVVSSENLDGQQQSSSTPASPAAEKVNLLGMSRAELEKFFEDIGEKKFRAGQVMKWIHQYFVTDFAEMTNISGKLRAKLEQICEIKAPEVVHRHYSKDGTRKWVFRVGEGSGSLVETVLIPAEDKTGSRKTLCISSQVGCALDCSFCSTGKQGFQRDLTPDEIIGQLWMANYSYMEEVPVAERERSVTNVVMMGMGEPLLNYDAVLSSMHIMLDDFAYGMSKRRVTLSTSGVVPKIDQLAKDIDVALAISLHAPNDELRNELVPINKKYPLAQLIAACQRYIAKDGNESARKHVTIEYVMLEGVNDQPEHAQQLLKLLKNLPSKINLIPFNPFPHAPYGRSSRNRIISFQKTLSDAGFVCTIRQTRGDDIDAACGQLVGQVADRTRRAEQWQKKVAQRQEILRTQG</sequence>
<gene>
    <name evidence="1" type="primary">rlmN</name>
    <name type="ordered locus">AB57_0601</name>
</gene>
<organism>
    <name type="scientific">Acinetobacter baumannii (strain AB0057)</name>
    <dbReference type="NCBI Taxonomy" id="480119"/>
    <lineage>
        <taxon>Bacteria</taxon>
        <taxon>Pseudomonadati</taxon>
        <taxon>Pseudomonadota</taxon>
        <taxon>Gammaproteobacteria</taxon>
        <taxon>Moraxellales</taxon>
        <taxon>Moraxellaceae</taxon>
        <taxon>Acinetobacter</taxon>
        <taxon>Acinetobacter calcoaceticus/baumannii complex</taxon>
    </lineage>
</organism>
<keyword id="KW-0004">4Fe-4S</keyword>
<keyword id="KW-0963">Cytoplasm</keyword>
<keyword id="KW-1015">Disulfide bond</keyword>
<keyword id="KW-0408">Iron</keyword>
<keyword id="KW-0411">Iron-sulfur</keyword>
<keyword id="KW-0479">Metal-binding</keyword>
<keyword id="KW-0489">Methyltransferase</keyword>
<keyword id="KW-0698">rRNA processing</keyword>
<keyword id="KW-0949">S-adenosyl-L-methionine</keyword>
<keyword id="KW-0808">Transferase</keyword>
<keyword id="KW-0819">tRNA processing</keyword>